<gene>
    <name evidence="1" type="primary">sfsA</name>
    <name type="ordered locus">Patl_3938</name>
</gene>
<name>SFSA_PSEA6</name>
<sequence length="234" mass="26286">MQFYNSLIEGILVKRYKRFLTDVTLLNGEEVVAHCPNTGAMIGCAEPGMQVWLSPSNNPKRKLGYTWELGVTHQGHWIGINTNNANKIVAEALATHAIQELQGYETVRPEVRFGHENSRIDFLLSSSDKKDCYVEVKSVTLLEEGQGYFPDAKTVRGQKHLRELAAMVEQGYRAVLLFCVQHSGIQSVKIAEHIDPKYAQMFKHAVDVGVEVLAYSCAINEQNITLNQRLPMIV</sequence>
<organism>
    <name type="scientific">Pseudoalteromonas atlantica (strain T6c / ATCC BAA-1087)</name>
    <dbReference type="NCBI Taxonomy" id="3042615"/>
    <lineage>
        <taxon>Bacteria</taxon>
        <taxon>Pseudomonadati</taxon>
        <taxon>Pseudomonadota</taxon>
        <taxon>Gammaproteobacteria</taxon>
        <taxon>Alteromonadales</taxon>
        <taxon>Alteromonadaceae</taxon>
        <taxon>Paraglaciecola</taxon>
    </lineage>
</organism>
<reference key="1">
    <citation type="submission" date="2006-06" db="EMBL/GenBank/DDBJ databases">
        <title>Complete sequence of Pseudoalteromonas atlantica T6c.</title>
        <authorList>
            <consortium name="US DOE Joint Genome Institute"/>
            <person name="Copeland A."/>
            <person name="Lucas S."/>
            <person name="Lapidus A."/>
            <person name="Barry K."/>
            <person name="Detter J.C."/>
            <person name="Glavina del Rio T."/>
            <person name="Hammon N."/>
            <person name="Israni S."/>
            <person name="Dalin E."/>
            <person name="Tice H."/>
            <person name="Pitluck S."/>
            <person name="Saunders E."/>
            <person name="Brettin T."/>
            <person name="Bruce D."/>
            <person name="Han C."/>
            <person name="Tapia R."/>
            <person name="Gilna P."/>
            <person name="Schmutz J."/>
            <person name="Larimer F."/>
            <person name="Land M."/>
            <person name="Hauser L."/>
            <person name="Kyrpides N."/>
            <person name="Kim E."/>
            <person name="Karls A.C."/>
            <person name="Bartlett D."/>
            <person name="Higgins B.P."/>
            <person name="Richardson P."/>
        </authorList>
    </citation>
    <scope>NUCLEOTIDE SEQUENCE [LARGE SCALE GENOMIC DNA]</scope>
    <source>
        <strain>T6c / ATCC BAA-1087</strain>
    </source>
</reference>
<dbReference type="EMBL" id="CP000388">
    <property type="protein sequence ID" value="ABG42438.1"/>
    <property type="molecule type" value="Genomic_DNA"/>
</dbReference>
<dbReference type="RefSeq" id="WP_011576644.1">
    <property type="nucleotide sequence ID" value="NC_008228.1"/>
</dbReference>
<dbReference type="SMR" id="Q15NV0"/>
<dbReference type="STRING" id="342610.Patl_3938"/>
<dbReference type="KEGG" id="pat:Patl_3938"/>
<dbReference type="eggNOG" id="COG1489">
    <property type="taxonomic scope" value="Bacteria"/>
</dbReference>
<dbReference type="HOGENOM" id="CLU_052299_2_0_6"/>
<dbReference type="OrthoDB" id="9802365at2"/>
<dbReference type="Proteomes" id="UP000001981">
    <property type="component" value="Chromosome"/>
</dbReference>
<dbReference type="GO" id="GO:0003677">
    <property type="term" value="F:DNA binding"/>
    <property type="evidence" value="ECO:0007669"/>
    <property type="project" value="InterPro"/>
</dbReference>
<dbReference type="CDD" id="cd22359">
    <property type="entry name" value="SfsA-like_bacterial"/>
    <property type="match status" value="1"/>
</dbReference>
<dbReference type="FunFam" id="2.40.50.580:FF:000001">
    <property type="entry name" value="Sugar fermentation stimulation protein A"/>
    <property type="match status" value="1"/>
</dbReference>
<dbReference type="FunFam" id="3.40.1350.60:FF:000001">
    <property type="entry name" value="Sugar fermentation stimulation protein A"/>
    <property type="match status" value="1"/>
</dbReference>
<dbReference type="Gene3D" id="2.40.50.580">
    <property type="match status" value="1"/>
</dbReference>
<dbReference type="Gene3D" id="3.40.1350.60">
    <property type="match status" value="1"/>
</dbReference>
<dbReference type="HAMAP" id="MF_00095">
    <property type="entry name" value="SfsA"/>
    <property type="match status" value="1"/>
</dbReference>
<dbReference type="InterPro" id="IPR005224">
    <property type="entry name" value="SfsA"/>
</dbReference>
<dbReference type="InterPro" id="IPR040452">
    <property type="entry name" value="SfsA_C"/>
</dbReference>
<dbReference type="InterPro" id="IPR041465">
    <property type="entry name" value="SfsA_N"/>
</dbReference>
<dbReference type="NCBIfam" id="TIGR00230">
    <property type="entry name" value="sfsA"/>
    <property type="match status" value="1"/>
</dbReference>
<dbReference type="PANTHER" id="PTHR30545">
    <property type="entry name" value="SUGAR FERMENTATION STIMULATION PROTEIN A"/>
    <property type="match status" value="1"/>
</dbReference>
<dbReference type="PANTHER" id="PTHR30545:SF2">
    <property type="entry name" value="SUGAR FERMENTATION STIMULATION PROTEIN A"/>
    <property type="match status" value="1"/>
</dbReference>
<dbReference type="Pfam" id="PF03749">
    <property type="entry name" value="SfsA"/>
    <property type="match status" value="1"/>
</dbReference>
<dbReference type="Pfam" id="PF17746">
    <property type="entry name" value="SfsA_N"/>
    <property type="match status" value="1"/>
</dbReference>
<proteinExistence type="inferred from homology"/>
<accession>Q15NV0</accession>
<protein>
    <recommendedName>
        <fullName evidence="1">Sugar fermentation stimulation protein homolog</fullName>
    </recommendedName>
</protein>
<evidence type="ECO:0000255" key="1">
    <source>
        <dbReference type="HAMAP-Rule" id="MF_00095"/>
    </source>
</evidence>
<comment type="similarity">
    <text evidence="1">Belongs to the SfsA family.</text>
</comment>
<feature type="chain" id="PRO_1000008007" description="Sugar fermentation stimulation protein homolog">
    <location>
        <begin position="1"/>
        <end position="234"/>
    </location>
</feature>